<gene>
    <name type="primary">smg-2</name>
    <name type="ORF">Y48G8AL.6</name>
</gene>
<evidence type="ECO:0000250" key="1"/>
<evidence type="ECO:0000250" key="2">
    <source>
        <dbReference type="UniProtKB" id="Q92900"/>
    </source>
</evidence>
<evidence type="ECO:0000255" key="3">
    <source>
        <dbReference type="PROSITE-ProRule" id="PRU00499"/>
    </source>
</evidence>
<evidence type="ECO:0000255" key="4">
    <source>
        <dbReference type="PROSITE-ProRule" id="PRU01341"/>
    </source>
</evidence>
<evidence type="ECO:0000256" key="5">
    <source>
        <dbReference type="SAM" id="MobiDB-lite"/>
    </source>
</evidence>
<evidence type="ECO:0000269" key="6">
    <source>
    </source>
</evidence>
<evidence type="ECO:0000305" key="7"/>
<sequence length="1069" mass="120020">MDDSDDEYSRSHGETLTFVDPEDDGVSIGNTQDSQFAYEQFSVPTQSSQATDLLPGGTDGTTNDLPFHDVEDDESDSEKSLTEEQHEQKLPEHACRYCGISDPLCVAKCTVCRKWFCNSNDGTSGGHIVHHMVRSQHKEAYTHKDSPCGDTQLECYRCGSKNVFNLGFIPGKKDQVVVIICRTPCASIAFQNDDNWSPEDWKSVIAEKQLLSWIVNVPSEEQVARARKITATQAVRMEELWRDHPEATVDDLNKPGLDREPDHVQLRYVDAHHYSKVFRPLVAIEAEYDRRVKESASQAVGTVRWEQGLRQSVLAFFHLPQFADGVMKLAKGDELRLKHSQTVDGSEWTKIGSVFKIPDNHGDEVGIEIRGAVDKSVMESRIMFTVDVVWNATTFERQYKALAALLNDSKAISPYLYQKLLGHPAEEMMLKFDLPRRLSVAGLPELNSSQMQAVKQVLTRPLSLIQGPPGTGKTVVSATIVYHLVQKTEGNVLVCSPSNIAVDHLAEKIHKTGLKVVRLCARSREHSETTVPYLTLQHQLKVMGGAELQKLIQLKDEAGELEFKDDLRYMQLKRVKEHELLAAADVICCTCSSAADARLSKIRTRTVLIDESTQATEPEILVSIMRGVRQLVLVGDHCQLGPVVICKKAAIAGLSQSLFERLVLLGIRPFRLQVQYRMHPVLSEFPSNVFYDGSLQNGVTENDRHMTGVDWHWPKPNKPAFFWHCSGSEELSASGTSFLNRTEAANVEKLVSKLIKAGVQPHQIGVITSYEGQRSFIVNYMHTQGTLNSKLYENVEIASVDAFQGREKDYIIVTCVRSNDILGIGFLSDPRRLNVAITRAKYGLVLVGNAKVLARHDLWHELINHYKSKEMLYEGPINALKPLNLALPKATIRTKNNIAGNANRFGIKRMQYTFNEYKSNDPSQPRLPPTYSNSQNLLSMSKLAQTFNKNVPIPAHMMDPNVYAAARNQKDRRRGDQRRPPPQAEAAMDLSQGMMSQQSQQYPPQGASSQSQYLLDGASSLSGWSQSQTTTTTTRHHHHRQNRNSQQQMSQDMDDIQQKMDDLLFSQDC</sequence>
<comment type="function">
    <text evidence="2">RNA-dependent helicase required for nonsense-mediated decay (NMD) of aberrant mRNAs containing premature stop codons and modulates the expression level of normal mRNAs. Is recruited to mRNAs upon translation termination and undergoes a cycle of phosphorylation and dephosphorylation; its phosphorylation appears to be a key step in NMD. The formation of an smg-2-3-4 surveillance complex is believed to activate NMD (By similarity).</text>
</comment>
<comment type="catalytic activity">
    <reaction evidence="2">
        <text>ATP + H2O = ADP + phosphate + H(+)</text>
        <dbReference type="Rhea" id="RHEA:13065"/>
        <dbReference type="ChEBI" id="CHEBI:15377"/>
        <dbReference type="ChEBI" id="CHEBI:15378"/>
        <dbReference type="ChEBI" id="CHEBI:30616"/>
        <dbReference type="ChEBI" id="CHEBI:43474"/>
        <dbReference type="ChEBI" id="CHEBI:456216"/>
        <dbReference type="EC" id="3.6.4.12"/>
    </reaction>
    <physiologicalReaction direction="left-to-right" evidence="2">
        <dbReference type="Rhea" id="RHEA:13066"/>
    </physiologicalReaction>
</comment>
<comment type="catalytic activity">
    <reaction evidence="2">
        <text>ATP + H2O = ADP + phosphate + H(+)</text>
        <dbReference type="Rhea" id="RHEA:13065"/>
        <dbReference type="ChEBI" id="CHEBI:15377"/>
        <dbReference type="ChEBI" id="CHEBI:15378"/>
        <dbReference type="ChEBI" id="CHEBI:30616"/>
        <dbReference type="ChEBI" id="CHEBI:43474"/>
        <dbReference type="ChEBI" id="CHEBI:456216"/>
        <dbReference type="EC" id="3.6.4.13"/>
    </reaction>
    <physiologicalReaction direction="left-to-right" evidence="2">
        <dbReference type="Rhea" id="RHEA:13066"/>
    </physiologicalReaction>
</comment>
<comment type="subcellular location">
    <subcellularLocation>
        <location evidence="1">Cytoplasm</location>
    </subcellularLocation>
</comment>
<comment type="PTM">
    <text>Phosphorylated probably by smg-1. Smg-3 and smg-4 are required for phosphorylation.</text>
</comment>
<comment type="similarity">
    <text evidence="7">Belongs to the DNA2/NAM7 helicase family.</text>
</comment>
<name>RENT1_CAEEL</name>
<proteinExistence type="evidence at protein level"/>
<keyword id="KW-0067">ATP-binding</keyword>
<keyword id="KW-0963">Cytoplasm</keyword>
<keyword id="KW-0347">Helicase</keyword>
<keyword id="KW-0378">Hydrolase</keyword>
<keyword id="KW-0479">Metal-binding</keyword>
<keyword id="KW-0547">Nucleotide-binding</keyword>
<keyword id="KW-0597">Phosphoprotein</keyword>
<keyword id="KW-1185">Reference proteome</keyword>
<keyword id="KW-0694">RNA-binding</keyword>
<keyword id="KW-0862">Zinc</keyword>
<keyword id="KW-0863">Zinc-finger</keyword>
<organism>
    <name type="scientific">Caenorhabditis elegans</name>
    <dbReference type="NCBI Taxonomy" id="6239"/>
    <lineage>
        <taxon>Eukaryota</taxon>
        <taxon>Metazoa</taxon>
        <taxon>Ecdysozoa</taxon>
        <taxon>Nematoda</taxon>
        <taxon>Chromadorea</taxon>
        <taxon>Rhabditida</taxon>
        <taxon>Rhabditina</taxon>
        <taxon>Rhabditomorpha</taxon>
        <taxon>Rhabditoidea</taxon>
        <taxon>Rhabditidae</taxon>
        <taxon>Peloderinae</taxon>
        <taxon>Caenorhabditis</taxon>
    </lineage>
</organism>
<accession>O76512</accession>
<accession>Q9BL16</accession>
<feature type="chain" id="PRO_0000080719" description="Regulator of nonsense transcripts 1">
    <location>
        <begin position="1"/>
        <end position="1069"/>
    </location>
</feature>
<feature type="domain" description="Upf1 CH-rich" evidence="4">
    <location>
        <begin position="87"/>
        <end position="244"/>
    </location>
</feature>
<feature type="region of interest" description="Disordered" evidence="5">
    <location>
        <begin position="1"/>
        <end position="86"/>
    </location>
</feature>
<feature type="region of interest" description="C3H" evidence="4">
    <location>
        <begin position="95"/>
        <end position="127"/>
    </location>
</feature>
<feature type="region of interest" description="CC/SHH/C" evidence="4">
    <location>
        <begin position="109"/>
        <end position="137"/>
    </location>
</feature>
<feature type="region of interest" description="C4" evidence="4">
    <location>
        <begin position="155"/>
        <end position="185"/>
    </location>
</feature>
<feature type="region of interest" description="Disordered" evidence="5">
    <location>
        <begin position="966"/>
        <end position="1069"/>
    </location>
</feature>
<feature type="compositionally biased region" description="Polar residues" evidence="5">
    <location>
        <begin position="28"/>
        <end position="50"/>
    </location>
</feature>
<feature type="compositionally biased region" description="Low complexity" evidence="5">
    <location>
        <begin position="51"/>
        <end position="65"/>
    </location>
</feature>
<feature type="compositionally biased region" description="Basic and acidic residues" evidence="5">
    <location>
        <begin position="77"/>
        <end position="86"/>
    </location>
</feature>
<feature type="compositionally biased region" description="Low complexity" evidence="5">
    <location>
        <begin position="991"/>
        <end position="1013"/>
    </location>
</feature>
<feature type="binding site" evidence="4">
    <location>
        <position position="95"/>
    </location>
    <ligand>
        <name>Zn(2+)</name>
        <dbReference type="ChEBI" id="CHEBI:29105"/>
        <label>1</label>
    </ligand>
</feature>
<feature type="binding site" evidence="4">
    <location>
        <position position="98"/>
    </location>
    <ligand>
        <name>Zn(2+)</name>
        <dbReference type="ChEBI" id="CHEBI:29105"/>
        <label>1</label>
    </ligand>
</feature>
<feature type="binding site" evidence="4">
    <location>
        <position position="109"/>
    </location>
    <ligand>
        <name>Zn(2+)</name>
        <dbReference type="ChEBI" id="CHEBI:29105"/>
        <label>2</label>
    </ligand>
</feature>
<feature type="binding site" evidence="4">
    <location>
        <position position="112"/>
    </location>
    <ligand>
        <name>Zn(2+)</name>
        <dbReference type="ChEBI" id="CHEBI:29105"/>
        <label>2</label>
    </ligand>
</feature>
<feature type="binding site" evidence="4">
    <location>
        <position position="117"/>
    </location>
    <ligand>
        <name>Zn(2+)</name>
        <dbReference type="ChEBI" id="CHEBI:29105"/>
        <label>1</label>
    </ligand>
</feature>
<feature type="binding site" evidence="4">
    <location>
        <position position="127"/>
    </location>
    <ligand>
        <name>Zn(2+)</name>
        <dbReference type="ChEBI" id="CHEBI:29105"/>
        <label>1</label>
    </ligand>
</feature>
<feature type="binding site" evidence="4">
    <location>
        <position position="131"/>
    </location>
    <ligand>
        <name>Zn(2+)</name>
        <dbReference type="ChEBI" id="CHEBI:29105"/>
        <label>2</label>
    </ligand>
</feature>
<feature type="binding site" evidence="4">
    <location>
        <position position="137"/>
    </location>
    <ligand>
        <name>Zn(2+)</name>
        <dbReference type="ChEBI" id="CHEBI:29105"/>
        <label>2</label>
    </ligand>
</feature>
<feature type="binding site" evidence="4">
    <location>
        <position position="155"/>
    </location>
    <ligand>
        <name>Zn(2+)</name>
        <dbReference type="ChEBI" id="CHEBI:29105"/>
        <label>3</label>
    </ligand>
</feature>
<feature type="binding site" evidence="4">
    <location>
        <position position="158"/>
    </location>
    <ligand>
        <name>Zn(2+)</name>
        <dbReference type="ChEBI" id="CHEBI:29105"/>
        <label>3</label>
    </ligand>
</feature>
<feature type="binding site" evidence="4">
    <location>
        <position position="181"/>
    </location>
    <ligand>
        <name>Zn(2+)</name>
        <dbReference type="ChEBI" id="CHEBI:29105"/>
        <label>3</label>
    </ligand>
</feature>
<feature type="binding site" evidence="4">
    <location>
        <position position="185"/>
    </location>
    <ligand>
        <name>Zn(2+)</name>
        <dbReference type="ChEBI" id="CHEBI:29105"/>
        <label>3</label>
    </ligand>
</feature>
<feature type="binding site" evidence="2">
    <location>
        <position position="450"/>
    </location>
    <ligand>
        <name>ATP</name>
        <dbReference type="ChEBI" id="CHEBI:30616"/>
    </ligand>
</feature>
<feature type="binding site" evidence="3">
    <location>
        <begin position="467"/>
        <end position="474"/>
    </location>
    <ligand>
        <name>ATP</name>
        <dbReference type="ChEBI" id="CHEBI:30616"/>
    </ligand>
</feature>
<feature type="binding site" evidence="2">
    <location>
        <position position="639"/>
    </location>
    <ligand>
        <name>ATP</name>
        <dbReference type="ChEBI" id="CHEBI:30616"/>
    </ligand>
</feature>
<feature type="binding site" evidence="2">
    <location>
        <position position="676"/>
    </location>
    <ligand>
        <name>ATP</name>
        <dbReference type="ChEBI" id="CHEBI:30616"/>
    </ligand>
</feature>
<feature type="binding site" evidence="2">
    <location>
        <position position="807"/>
    </location>
    <ligand>
        <name>ATP</name>
        <dbReference type="ChEBI" id="CHEBI:30616"/>
    </ligand>
</feature>
<feature type="mutagenesis site" description="In R866; loss of activity and increased phosphorylation." evidence="6">
    <original>G</original>
    <variation>R</variation>
    <location>
        <position position="470"/>
    </location>
</feature>
<feature type="mutagenesis site" description="In R895; loss of activity and increased phosphorylation." evidence="6">
    <original>G</original>
    <variation>E</variation>
    <location>
        <position position="472"/>
    </location>
</feature>
<feature type="sequence conflict" description="In Ref. 2; CCD73461." evidence="7" ref="2">
    <original>HE</original>
    <variation>QQ</variation>
    <location>
        <begin position="86"/>
        <end position="87"/>
    </location>
</feature>
<feature type="sequence conflict" description="In Ref. 2; CCD73461." evidence="7" ref="2">
    <original>S</original>
    <variation>P</variation>
    <location>
        <position position="769"/>
    </location>
</feature>
<reference key="1">
    <citation type="journal article" date="1999" name="Mol. Cell. Biol.">
        <title>SMG-2 is a phosphorylated protein required for mRNA surveillance in Caenorhabditis elegans and related to Upf1p of yeast.</title>
        <authorList>
            <person name="Page M.F."/>
            <person name="Carr B."/>
            <person name="Anders K.R."/>
            <person name="Grimson A."/>
            <person name="Anderson P."/>
        </authorList>
    </citation>
    <scope>NUCLEOTIDE SEQUENCE [MRNA]</scope>
    <scope>MUTAGENESIS OF GLY-470 AND GLY-472</scope>
</reference>
<reference key="2">
    <citation type="journal article" date="1998" name="Science">
        <title>Genome sequence of the nematode C. elegans: a platform for investigating biology.</title>
        <authorList>
            <consortium name="The C. elegans sequencing consortium"/>
        </authorList>
    </citation>
    <scope>NUCLEOTIDE SEQUENCE [LARGE SCALE GENOMIC DNA]</scope>
    <source>
        <strain>Bristol N2</strain>
    </source>
</reference>
<protein>
    <recommendedName>
        <fullName>Regulator of nonsense transcripts 1</fullName>
        <ecNumber evidence="2">3.6.4.12</ecNumber>
        <ecNumber evidence="2">3.6.4.13</ecNumber>
    </recommendedName>
    <alternativeName>
        <fullName>ATP-dependent helicase smg-2</fullName>
    </alternativeName>
    <alternativeName>
        <fullName>Nonsense mRNA reducing factor 1</fullName>
    </alternativeName>
    <alternativeName>
        <fullName>Up-frameshift suppressor 1 homolog</fullName>
    </alternativeName>
</protein>
<dbReference type="EC" id="3.6.4.12" evidence="2"/>
<dbReference type="EC" id="3.6.4.13" evidence="2"/>
<dbReference type="EMBL" id="AF074017">
    <property type="protein sequence ID" value="AAC26789.1"/>
    <property type="molecule type" value="mRNA"/>
</dbReference>
<dbReference type="EMBL" id="FO081800">
    <property type="protein sequence ID" value="CCD73461.1"/>
    <property type="molecule type" value="Genomic_DNA"/>
</dbReference>
<dbReference type="PIR" id="T43280">
    <property type="entry name" value="T43280"/>
</dbReference>
<dbReference type="RefSeq" id="NP_490829.1">
    <property type="nucleotide sequence ID" value="NM_058428.4"/>
</dbReference>
<dbReference type="SMR" id="O76512"/>
<dbReference type="BioGRID" id="37194">
    <property type="interactions" value="26"/>
</dbReference>
<dbReference type="FunCoup" id="O76512">
    <property type="interactions" value="3685"/>
</dbReference>
<dbReference type="IntAct" id="O76512">
    <property type="interactions" value="1"/>
</dbReference>
<dbReference type="MINT" id="O76512"/>
<dbReference type="STRING" id="6239.Y48G8AL.6.2"/>
<dbReference type="iPTMnet" id="O76512"/>
<dbReference type="PaxDb" id="6239-Y48G8AL.6"/>
<dbReference type="PeptideAtlas" id="O76512"/>
<dbReference type="EnsemblMetazoa" id="Y48G8AL.6.1">
    <property type="protein sequence ID" value="Y48G8AL.6.1"/>
    <property type="gene ID" value="WBGene00004880"/>
</dbReference>
<dbReference type="GeneID" id="171696"/>
<dbReference type="KEGG" id="cel:CELE_Y48G8AL.6"/>
<dbReference type="UCSC" id="Y48G8AL.6">
    <property type="organism name" value="c. elegans"/>
</dbReference>
<dbReference type="AGR" id="WB:WBGene00004880"/>
<dbReference type="CTD" id="171696"/>
<dbReference type="WormBase" id="Y48G8AL.6">
    <property type="protein sequence ID" value="CE28367"/>
    <property type="gene ID" value="WBGene00004880"/>
    <property type="gene designation" value="smg-2"/>
</dbReference>
<dbReference type="eggNOG" id="KOG1802">
    <property type="taxonomic scope" value="Eukaryota"/>
</dbReference>
<dbReference type="GeneTree" id="ENSGT00940000157413"/>
<dbReference type="HOGENOM" id="CLU_001666_4_1_1"/>
<dbReference type="InParanoid" id="O76512"/>
<dbReference type="OrthoDB" id="6513042at2759"/>
<dbReference type="PhylomeDB" id="O76512"/>
<dbReference type="Reactome" id="R-CEL-975956">
    <property type="pathway name" value="Nonsense Mediated Decay (NMD) independent of the Exon Junction Complex (EJC)"/>
</dbReference>
<dbReference type="Reactome" id="R-CEL-975957">
    <property type="pathway name" value="Nonsense Mediated Decay (NMD) enhanced by the Exon Junction Complex (EJC)"/>
</dbReference>
<dbReference type="PRO" id="PR:O76512"/>
<dbReference type="Proteomes" id="UP000001940">
    <property type="component" value="Chromosome I"/>
</dbReference>
<dbReference type="Bgee" id="WBGene00004880">
    <property type="expression patterns" value="Expressed in germ line (C elegans) and 4 other cell types or tissues"/>
</dbReference>
<dbReference type="GO" id="GO:0005737">
    <property type="term" value="C:cytoplasm"/>
    <property type="evidence" value="ECO:0000314"/>
    <property type="project" value="WormBase"/>
</dbReference>
<dbReference type="GO" id="GO:0005634">
    <property type="term" value="C:nucleus"/>
    <property type="evidence" value="ECO:0000314"/>
    <property type="project" value="WormBase"/>
</dbReference>
<dbReference type="GO" id="GO:0005524">
    <property type="term" value="F:ATP binding"/>
    <property type="evidence" value="ECO:0007669"/>
    <property type="project" value="UniProtKB-KW"/>
</dbReference>
<dbReference type="GO" id="GO:0016887">
    <property type="term" value="F:ATP hydrolysis activity"/>
    <property type="evidence" value="ECO:0000250"/>
    <property type="project" value="UniProtKB"/>
</dbReference>
<dbReference type="GO" id="GO:0036121">
    <property type="term" value="F:double-stranded DNA helicase activity"/>
    <property type="evidence" value="ECO:0000250"/>
    <property type="project" value="UniProtKB"/>
</dbReference>
<dbReference type="GO" id="GO:0051721">
    <property type="term" value="F:protein phosphatase 2A binding"/>
    <property type="evidence" value="ECO:0000353"/>
    <property type="project" value="WormBase"/>
</dbReference>
<dbReference type="GO" id="GO:0003723">
    <property type="term" value="F:RNA binding"/>
    <property type="evidence" value="ECO:0000318"/>
    <property type="project" value="GO_Central"/>
</dbReference>
<dbReference type="GO" id="GO:0003724">
    <property type="term" value="F:RNA helicase activity"/>
    <property type="evidence" value="ECO:0000250"/>
    <property type="project" value="WormBase"/>
</dbReference>
<dbReference type="GO" id="GO:0008270">
    <property type="term" value="F:zinc ion binding"/>
    <property type="evidence" value="ECO:0007669"/>
    <property type="project" value="UniProtKB-KW"/>
</dbReference>
<dbReference type="GO" id="GO:0030538">
    <property type="term" value="P:embryonic genitalia morphogenesis"/>
    <property type="evidence" value="ECO:0000315"/>
    <property type="project" value="WormBase"/>
</dbReference>
<dbReference type="GO" id="GO:0000956">
    <property type="term" value="P:nuclear-transcribed mRNA catabolic process"/>
    <property type="evidence" value="ECO:0000315"/>
    <property type="project" value="UniProtKB"/>
</dbReference>
<dbReference type="GO" id="GO:0000184">
    <property type="term" value="P:nuclear-transcribed mRNA catabolic process, nonsense-mediated decay"/>
    <property type="evidence" value="ECO:0000315"/>
    <property type="project" value="WormBase"/>
</dbReference>
<dbReference type="GO" id="GO:0035194">
    <property type="term" value="P:regulatory ncRNA-mediated post-transcriptional gene silencing"/>
    <property type="evidence" value="ECO:0000315"/>
    <property type="project" value="WormBase"/>
</dbReference>
<dbReference type="GO" id="GO:0030422">
    <property type="term" value="P:siRNA processing"/>
    <property type="evidence" value="ECO:0000315"/>
    <property type="project" value="WormBase"/>
</dbReference>
<dbReference type="CDD" id="cd21407">
    <property type="entry name" value="1B_UPF1-like"/>
    <property type="match status" value="1"/>
</dbReference>
<dbReference type="CDD" id="cd18039">
    <property type="entry name" value="DEXXQc_UPF1"/>
    <property type="match status" value="1"/>
</dbReference>
<dbReference type="CDD" id="cd18808">
    <property type="entry name" value="SF1_C_Upf1"/>
    <property type="match status" value="1"/>
</dbReference>
<dbReference type="CDD" id="cd21400">
    <property type="entry name" value="ZBD_UPF1-like"/>
    <property type="match status" value="1"/>
</dbReference>
<dbReference type="FunFam" id="2.40.30.230:FF:000007">
    <property type="entry name" value="Regulator of nonsense transcripts 1"/>
    <property type="match status" value="1"/>
</dbReference>
<dbReference type="FunFam" id="3.40.50.300:FF:000097">
    <property type="entry name" value="Regulator of nonsense transcripts 1"/>
    <property type="match status" value="1"/>
</dbReference>
<dbReference type="Gene3D" id="2.40.30.230">
    <property type="match status" value="1"/>
</dbReference>
<dbReference type="Gene3D" id="6.10.140.1240">
    <property type="match status" value="1"/>
</dbReference>
<dbReference type="Gene3D" id="3.40.50.300">
    <property type="entry name" value="P-loop containing nucleotide triphosphate hydrolases"/>
    <property type="match status" value="2"/>
</dbReference>
<dbReference type="InterPro" id="IPR045055">
    <property type="entry name" value="DNA2/NAM7-like"/>
</dbReference>
<dbReference type="InterPro" id="IPR041679">
    <property type="entry name" value="DNA2/NAM7-like_C"/>
</dbReference>
<dbReference type="InterPro" id="IPR041677">
    <property type="entry name" value="DNA2/NAM7_AAA_11"/>
</dbReference>
<dbReference type="InterPro" id="IPR027417">
    <property type="entry name" value="P-loop_NTPase"/>
</dbReference>
<dbReference type="InterPro" id="IPR047187">
    <property type="entry name" value="SF1_C_Upf1"/>
</dbReference>
<dbReference type="InterPro" id="IPR040812">
    <property type="entry name" value="UPF1_1B_dom"/>
</dbReference>
<dbReference type="InterPro" id="IPR018999">
    <property type="entry name" value="UPF1_CH/ZBD"/>
</dbReference>
<dbReference type="PANTHER" id="PTHR10887">
    <property type="entry name" value="DNA2/NAM7 HELICASE FAMILY"/>
    <property type="match status" value="1"/>
</dbReference>
<dbReference type="PANTHER" id="PTHR10887:SF364">
    <property type="entry name" value="REGULATOR OF NONSENSE TRANSCRIPTS 1"/>
    <property type="match status" value="1"/>
</dbReference>
<dbReference type="Pfam" id="PF13086">
    <property type="entry name" value="AAA_11"/>
    <property type="match status" value="2"/>
</dbReference>
<dbReference type="Pfam" id="PF13087">
    <property type="entry name" value="AAA_12"/>
    <property type="match status" value="1"/>
</dbReference>
<dbReference type="Pfam" id="PF18141">
    <property type="entry name" value="UPF1_1B_dom"/>
    <property type="match status" value="1"/>
</dbReference>
<dbReference type="Pfam" id="PF09416">
    <property type="entry name" value="UPF1_Zn_bind"/>
    <property type="match status" value="1"/>
</dbReference>
<dbReference type="SUPFAM" id="SSF52540">
    <property type="entry name" value="P-loop containing nucleoside triphosphate hydrolases"/>
    <property type="match status" value="1"/>
</dbReference>
<dbReference type="PROSITE" id="PS51997">
    <property type="entry name" value="UPF1_CH_RICH"/>
    <property type="match status" value="1"/>
</dbReference>